<name>LEUC_HALH5</name>
<sequence length="472" mass="50887">MAPKTIIEKIWDAHTVIGEEGKPSLLYIDLHMVHEVTSPQAFEGLRLAGRPVRRPDLTFATMDHNVPTVDRFNIQDQIARKQIETLEANCKEFGIEIAGLDSPNNGIVHVIGPELGLTQPGKTIVCGDSHTSTHGAFGALAFGIGTSEVEHVLATQTLWQSKPKTMEVRVTGELAPSVSAKDIILAVIAKYGVDFGTGHVIEFTGEAIRSLSMEERMTICNMSIEAGAKAGLISPDSVTFEYLRGRPNAPKGEAFDVAIQQWEALATDAGAVYDRVLTMNASEIEPMVTWGTNPAQGTGVSQVVPSPDDAKDENERRAIKQSLAYMGLEPGTPITEIAIQHVFIGSCTNSRLSDLRTAAELIKGRKVADGVRALVVPGSQQVKRAAEKEGLDEIFKEAGFEWRDSGCSMCLGMNPDTVPEGERCASTSNRNFEGRQGKGARTHLVSPQMAAAAAIAGHFVDVRTFQSEPQTV</sequence>
<accession>Q9K8F0</accession>
<proteinExistence type="inferred from homology"/>
<gene>
    <name evidence="1" type="primary">leuC</name>
    <name type="ordered locus">BH3056</name>
</gene>
<keyword id="KW-0004">4Fe-4S</keyword>
<keyword id="KW-0028">Amino-acid biosynthesis</keyword>
<keyword id="KW-0100">Branched-chain amino acid biosynthesis</keyword>
<keyword id="KW-0408">Iron</keyword>
<keyword id="KW-0411">Iron-sulfur</keyword>
<keyword id="KW-0432">Leucine biosynthesis</keyword>
<keyword id="KW-0456">Lyase</keyword>
<keyword id="KW-0479">Metal-binding</keyword>
<keyword id="KW-1185">Reference proteome</keyword>
<reference key="1">
    <citation type="journal article" date="2000" name="Nucleic Acids Res.">
        <title>Complete genome sequence of the alkaliphilic bacterium Bacillus halodurans and genomic sequence comparison with Bacillus subtilis.</title>
        <authorList>
            <person name="Takami H."/>
            <person name="Nakasone K."/>
            <person name="Takaki Y."/>
            <person name="Maeno G."/>
            <person name="Sasaki R."/>
            <person name="Masui N."/>
            <person name="Fuji F."/>
            <person name="Hirama C."/>
            <person name="Nakamura Y."/>
            <person name="Ogasawara N."/>
            <person name="Kuhara S."/>
            <person name="Horikoshi K."/>
        </authorList>
    </citation>
    <scope>NUCLEOTIDE SEQUENCE [LARGE SCALE GENOMIC DNA]</scope>
    <source>
        <strain>ATCC BAA-125 / DSM 18197 / FERM 7344 / JCM 9153 / C-125</strain>
    </source>
</reference>
<organism>
    <name type="scientific">Halalkalibacterium halodurans (strain ATCC BAA-125 / DSM 18197 / FERM 7344 / JCM 9153 / C-125)</name>
    <name type="common">Bacillus halodurans</name>
    <dbReference type="NCBI Taxonomy" id="272558"/>
    <lineage>
        <taxon>Bacteria</taxon>
        <taxon>Bacillati</taxon>
        <taxon>Bacillota</taxon>
        <taxon>Bacilli</taxon>
        <taxon>Bacillales</taxon>
        <taxon>Bacillaceae</taxon>
        <taxon>Halalkalibacterium (ex Joshi et al. 2022)</taxon>
    </lineage>
</organism>
<comment type="function">
    <text evidence="1">Catalyzes the isomerization between 2-isopropylmalate and 3-isopropylmalate, via the formation of 2-isopropylmaleate.</text>
</comment>
<comment type="catalytic activity">
    <reaction evidence="1">
        <text>(2R,3S)-3-isopropylmalate = (2S)-2-isopropylmalate</text>
        <dbReference type="Rhea" id="RHEA:32287"/>
        <dbReference type="ChEBI" id="CHEBI:1178"/>
        <dbReference type="ChEBI" id="CHEBI:35121"/>
        <dbReference type="EC" id="4.2.1.33"/>
    </reaction>
</comment>
<comment type="cofactor">
    <cofactor evidence="1">
        <name>[4Fe-4S] cluster</name>
        <dbReference type="ChEBI" id="CHEBI:49883"/>
    </cofactor>
    <text evidence="1">Binds 1 [4Fe-4S] cluster per subunit.</text>
</comment>
<comment type="pathway">
    <text evidence="1">Amino-acid biosynthesis; L-leucine biosynthesis; L-leucine from 3-methyl-2-oxobutanoate: step 2/4.</text>
</comment>
<comment type="subunit">
    <text evidence="1">Heterodimer of LeuC and LeuD.</text>
</comment>
<comment type="similarity">
    <text evidence="1">Belongs to the aconitase/IPM isomerase family. LeuC type 1 subfamily.</text>
</comment>
<dbReference type="EC" id="4.2.1.33" evidence="1"/>
<dbReference type="EMBL" id="BA000004">
    <property type="protein sequence ID" value="BAB06775.1"/>
    <property type="molecule type" value="Genomic_DNA"/>
</dbReference>
<dbReference type="PIR" id="H84031">
    <property type="entry name" value="H84031"/>
</dbReference>
<dbReference type="RefSeq" id="WP_010899200.1">
    <property type="nucleotide sequence ID" value="NC_002570.2"/>
</dbReference>
<dbReference type="SMR" id="Q9K8F0"/>
<dbReference type="STRING" id="272558.gene:10728966"/>
<dbReference type="KEGG" id="bha:BH3056"/>
<dbReference type="eggNOG" id="COG0065">
    <property type="taxonomic scope" value="Bacteria"/>
</dbReference>
<dbReference type="HOGENOM" id="CLU_006714_3_4_9"/>
<dbReference type="OrthoDB" id="9802769at2"/>
<dbReference type="UniPathway" id="UPA00048">
    <property type="reaction ID" value="UER00071"/>
</dbReference>
<dbReference type="Proteomes" id="UP000001258">
    <property type="component" value="Chromosome"/>
</dbReference>
<dbReference type="GO" id="GO:0003861">
    <property type="term" value="F:3-isopropylmalate dehydratase activity"/>
    <property type="evidence" value="ECO:0007669"/>
    <property type="project" value="UniProtKB-UniRule"/>
</dbReference>
<dbReference type="GO" id="GO:0051539">
    <property type="term" value="F:4 iron, 4 sulfur cluster binding"/>
    <property type="evidence" value="ECO:0007669"/>
    <property type="project" value="UniProtKB-KW"/>
</dbReference>
<dbReference type="GO" id="GO:0046872">
    <property type="term" value="F:metal ion binding"/>
    <property type="evidence" value="ECO:0007669"/>
    <property type="project" value="UniProtKB-KW"/>
</dbReference>
<dbReference type="GO" id="GO:0009098">
    <property type="term" value="P:L-leucine biosynthetic process"/>
    <property type="evidence" value="ECO:0007669"/>
    <property type="project" value="UniProtKB-UniRule"/>
</dbReference>
<dbReference type="CDD" id="cd01583">
    <property type="entry name" value="IPMI"/>
    <property type="match status" value="1"/>
</dbReference>
<dbReference type="FunFam" id="3.30.499.10:FF:000007">
    <property type="entry name" value="3-isopropylmalate dehydratase large subunit"/>
    <property type="match status" value="1"/>
</dbReference>
<dbReference type="Gene3D" id="3.30.499.10">
    <property type="entry name" value="Aconitase, domain 3"/>
    <property type="match status" value="2"/>
</dbReference>
<dbReference type="HAMAP" id="MF_01026">
    <property type="entry name" value="LeuC_type1"/>
    <property type="match status" value="1"/>
</dbReference>
<dbReference type="InterPro" id="IPR004430">
    <property type="entry name" value="3-IsopropMal_deHydase_lsu"/>
</dbReference>
<dbReference type="InterPro" id="IPR015931">
    <property type="entry name" value="Acnase/IPM_dHydase_lsu_aba_1/3"/>
</dbReference>
<dbReference type="InterPro" id="IPR001030">
    <property type="entry name" value="Acoase/IPM_deHydtase_lsu_aba"/>
</dbReference>
<dbReference type="InterPro" id="IPR018136">
    <property type="entry name" value="Aconitase_4Fe-4S_BS"/>
</dbReference>
<dbReference type="InterPro" id="IPR036008">
    <property type="entry name" value="Aconitase_4Fe-4S_dom"/>
</dbReference>
<dbReference type="InterPro" id="IPR050067">
    <property type="entry name" value="IPM_dehydratase_rel_enz"/>
</dbReference>
<dbReference type="InterPro" id="IPR033941">
    <property type="entry name" value="IPMI_cat"/>
</dbReference>
<dbReference type="NCBIfam" id="TIGR00170">
    <property type="entry name" value="leuC"/>
    <property type="match status" value="1"/>
</dbReference>
<dbReference type="NCBIfam" id="NF004016">
    <property type="entry name" value="PRK05478.1"/>
    <property type="match status" value="1"/>
</dbReference>
<dbReference type="NCBIfam" id="NF009116">
    <property type="entry name" value="PRK12466.1"/>
    <property type="match status" value="1"/>
</dbReference>
<dbReference type="PANTHER" id="PTHR43822:SF9">
    <property type="entry name" value="3-ISOPROPYLMALATE DEHYDRATASE"/>
    <property type="match status" value="1"/>
</dbReference>
<dbReference type="PANTHER" id="PTHR43822">
    <property type="entry name" value="HOMOACONITASE, MITOCHONDRIAL-RELATED"/>
    <property type="match status" value="1"/>
</dbReference>
<dbReference type="Pfam" id="PF00330">
    <property type="entry name" value="Aconitase"/>
    <property type="match status" value="1"/>
</dbReference>
<dbReference type="PRINTS" id="PR00415">
    <property type="entry name" value="ACONITASE"/>
</dbReference>
<dbReference type="SUPFAM" id="SSF53732">
    <property type="entry name" value="Aconitase iron-sulfur domain"/>
    <property type="match status" value="1"/>
</dbReference>
<dbReference type="PROSITE" id="PS00450">
    <property type="entry name" value="ACONITASE_1"/>
    <property type="match status" value="1"/>
</dbReference>
<dbReference type="PROSITE" id="PS01244">
    <property type="entry name" value="ACONITASE_2"/>
    <property type="match status" value="1"/>
</dbReference>
<evidence type="ECO:0000255" key="1">
    <source>
        <dbReference type="HAMAP-Rule" id="MF_01026"/>
    </source>
</evidence>
<evidence type="ECO:0000256" key="2">
    <source>
        <dbReference type="SAM" id="MobiDB-lite"/>
    </source>
</evidence>
<protein>
    <recommendedName>
        <fullName evidence="1">3-isopropylmalate dehydratase large subunit</fullName>
        <ecNumber evidence="1">4.2.1.33</ecNumber>
    </recommendedName>
    <alternativeName>
        <fullName evidence="1">Alpha-IPM isomerase</fullName>
        <shortName evidence="1">IPMI</shortName>
    </alternativeName>
    <alternativeName>
        <fullName evidence="1">Isopropylmalate isomerase</fullName>
    </alternativeName>
</protein>
<feature type="chain" id="PRO_0000076698" description="3-isopropylmalate dehydratase large subunit">
    <location>
        <begin position="1"/>
        <end position="472"/>
    </location>
</feature>
<feature type="region of interest" description="Disordered" evidence="2">
    <location>
        <begin position="289"/>
        <end position="312"/>
    </location>
</feature>
<feature type="compositionally biased region" description="Polar residues" evidence="2">
    <location>
        <begin position="290"/>
        <end position="304"/>
    </location>
</feature>
<feature type="binding site" evidence="1">
    <location>
        <position position="347"/>
    </location>
    <ligand>
        <name>[4Fe-4S] cluster</name>
        <dbReference type="ChEBI" id="CHEBI:49883"/>
    </ligand>
</feature>
<feature type="binding site" evidence="1">
    <location>
        <position position="407"/>
    </location>
    <ligand>
        <name>[4Fe-4S] cluster</name>
        <dbReference type="ChEBI" id="CHEBI:49883"/>
    </ligand>
</feature>
<feature type="binding site" evidence="1">
    <location>
        <position position="410"/>
    </location>
    <ligand>
        <name>[4Fe-4S] cluster</name>
        <dbReference type="ChEBI" id="CHEBI:49883"/>
    </ligand>
</feature>